<reference key="1">
    <citation type="journal article" date="1990" name="Genes Dev.">
        <title>Cloning and characterization of the segment polarity gene cubitus interruptus Dominant of Drosophila.</title>
        <authorList>
            <person name="Orenic T.V."/>
            <person name="Slusarski D.C."/>
            <person name="Kroll K.L."/>
            <person name="Holmgren R.A."/>
        </authorList>
    </citation>
    <scope>NUCLEOTIDE SEQUENCE [MRNA]</scope>
    <scope>DEVELOPMENTAL STAGE</scope>
    <source>
        <strain>Oregon-R</strain>
        <tissue>Embryo</tissue>
    </source>
</reference>
<reference key="2">
    <citation type="journal article" date="1991" name="Genetics">
        <title>Lack of polymorphism on the Drosophila fourth chromosome resulting from selection.</title>
        <authorList>
            <person name="Berry A.J."/>
            <person name="Ajioka J.W."/>
            <person name="Kreitman M."/>
        </authorList>
    </citation>
    <scope>NUCLEOTIDE SEQUENCE [GENOMIC DNA]</scope>
    <source>
        <strain>Oregon-R</strain>
        <tissue>Embryo</tissue>
    </source>
</reference>
<reference key="3">
    <citation type="journal article" date="1997" name="Gene">
        <title>Use of ordered deletions in genome sequencing.</title>
        <authorList>
            <person name="Ahmed A."/>
            <person name="Podemski L."/>
        </authorList>
    </citation>
    <scope>NUCLEOTIDE SEQUENCE [GENOMIC DNA]</scope>
    <source>
        <tissue>Embryo</tissue>
    </source>
</reference>
<reference key="4">
    <citation type="journal article" date="2000" name="Science">
        <title>The genome sequence of Drosophila melanogaster.</title>
        <authorList>
            <person name="Adams M.D."/>
            <person name="Celniker S.E."/>
            <person name="Holt R.A."/>
            <person name="Evans C.A."/>
            <person name="Gocayne J.D."/>
            <person name="Amanatides P.G."/>
            <person name="Scherer S.E."/>
            <person name="Li P.W."/>
            <person name="Hoskins R.A."/>
            <person name="Galle R.F."/>
            <person name="George R.A."/>
            <person name="Lewis S.E."/>
            <person name="Richards S."/>
            <person name="Ashburner M."/>
            <person name="Henderson S.N."/>
            <person name="Sutton G.G."/>
            <person name="Wortman J.R."/>
            <person name="Yandell M.D."/>
            <person name="Zhang Q."/>
            <person name="Chen L.X."/>
            <person name="Brandon R.C."/>
            <person name="Rogers Y.-H.C."/>
            <person name="Blazej R.G."/>
            <person name="Champe M."/>
            <person name="Pfeiffer B.D."/>
            <person name="Wan K.H."/>
            <person name="Doyle C."/>
            <person name="Baxter E.G."/>
            <person name="Helt G."/>
            <person name="Nelson C.R."/>
            <person name="Miklos G.L.G."/>
            <person name="Abril J.F."/>
            <person name="Agbayani A."/>
            <person name="An H.-J."/>
            <person name="Andrews-Pfannkoch C."/>
            <person name="Baldwin D."/>
            <person name="Ballew R.M."/>
            <person name="Basu A."/>
            <person name="Baxendale J."/>
            <person name="Bayraktaroglu L."/>
            <person name="Beasley E.M."/>
            <person name="Beeson K.Y."/>
            <person name="Benos P.V."/>
            <person name="Berman B.P."/>
            <person name="Bhandari D."/>
            <person name="Bolshakov S."/>
            <person name="Borkova D."/>
            <person name="Botchan M.R."/>
            <person name="Bouck J."/>
            <person name="Brokstein P."/>
            <person name="Brottier P."/>
            <person name="Burtis K.C."/>
            <person name="Busam D.A."/>
            <person name="Butler H."/>
            <person name="Cadieu E."/>
            <person name="Center A."/>
            <person name="Chandra I."/>
            <person name="Cherry J.M."/>
            <person name="Cawley S."/>
            <person name="Dahlke C."/>
            <person name="Davenport L.B."/>
            <person name="Davies P."/>
            <person name="de Pablos B."/>
            <person name="Delcher A."/>
            <person name="Deng Z."/>
            <person name="Mays A.D."/>
            <person name="Dew I."/>
            <person name="Dietz S.M."/>
            <person name="Dodson K."/>
            <person name="Doup L.E."/>
            <person name="Downes M."/>
            <person name="Dugan-Rocha S."/>
            <person name="Dunkov B.C."/>
            <person name="Dunn P."/>
            <person name="Durbin K.J."/>
            <person name="Evangelista C.C."/>
            <person name="Ferraz C."/>
            <person name="Ferriera S."/>
            <person name="Fleischmann W."/>
            <person name="Fosler C."/>
            <person name="Gabrielian A.E."/>
            <person name="Garg N.S."/>
            <person name="Gelbart W.M."/>
            <person name="Glasser K."/>
            <person name="Glodek A."/>
            <person name="Gong F."/>
            <person name="Gorrell J.H."/>
            <person name="Gu Z."/>
            <person name="Guan P."/>
            <person name="Harris M."/>
            <person name="Harris N.L."/>
            <person name="Harvey D.A."/>
            <person name="Heiman T.J."/>
            <person name="Hernandez J.R."/>
            <person name="Houck J."/>
            <person name="Hostin D."/>
            <person name="Houston K.A."/>
            <person name="Howland T.J."/>
            <person name="Wei M.-H."/>
            <person name="Ibegwam C."/>
            <person name="Jalali M."/>
            <person name="Kalush F."/>
            <person name="Karpen G.H."/>
            <person name="Ke Z."/>
            <person name="Kennison J.A."/>
            <person name="Ketchum K.A."/>
            <person name="Kimmel B.E."/>
            <person name="Kodira C.D."/>
            <person name="Kraft C.L."/>
            <person name="Kravitz S."/>
            <person name="Kulp D."/>
            <person name="Lai Z."/>
            <person name="Lasko P."/>
            <person name="Lei Y."/>
            <person name="Levitsky A.A."/>
            <person name="Li J.H."/>
            <person name="Li Z."/>
            <person name="Liang Y."/>
            <person name="Lin X."/>
            <person name="Liu X."/>
            <person name="Mattei B."/>
            <person name="McIntosh T.C."/>
            <person name="McLeod M.P."/>
            <person name="McPherson D."/>
            <person name="Merkulov G."/>
            <person name="Milshina N.V."/>
            <person name="Mobarry C."/>
            <person name="Morris J."/>
            <person name="Moshrefi A."/>
            <person name="Mount S.M."/>
            <person name="Moy M."/>
            <person name="Murphy B."/>
            <person name="Murphy L."/>
            <person name="Muzny D.M."/>
            <person name="Nelson D.L."/>
            <person name="Nelson D.R."/>
            <person name="Nelson K.A."/>
            <person name="Nixon K."/>
            <person name="Nusskern D.R."/>
            <person name="Pacleb J.M."/>
            <person name="Palazzolo M."/>
            <person name="Pittman G.S."/>
            <person name="Pan S."/>
            <person name="Pollard J."/>
            <person name="Puri V."/>
            <person name="Reese M.G."/>
            <person name="Reinert K."/>
            <person name="Remington K."/>
            <person name="Saunders R.D.C."/>
            <person name="Scheeler F."/>
            <person name="Shen H."/>
            <person name="Shue B.C."/>
            <person name="Siden-Kiamos I."/>
            <person name="Simpson M."/>
            <person name="Skupski M.P."/>
            <person name="Smith T.J."/>
            <person name="Spier E."/>
            <person name="Spradling A.C."/>
            <person name="Stapleton M."/>
            <person name="Strong R."/>
            <person name="Sun E."/>
            <person name="Svirskas R."/>
            <person name="Tector C."/>
            <person name="Turner R."/>
            <person name="Venter E."/>
            <person name="Wang A.H."/>
            <person name="Wang X."/>
            <person name="Wang Z.-Y."/>
            <person name="Wassarman D.A."/>
            <person name="Weinstock G.M."/>
            <person name="Weissenbach J."/>
            <person name="Williams S.M."/>
            <person name="Woodage T."/>
            <person name="Worley K.C."/>
            <person name="Wu D."/>
            <person name="Yang S."/>
            <person name="Yao Q.A."/>
            <person name="Ye J."/>
            <person name="Yeh R.-F."/>
            <person name="Zaveri J.S."/>
            <person name="Zhan M."/>
            <person name="Zhang G."/>
            <person name="Zhao Q."/>
            <person name="Zheng L."/>
            <person name="Zheng X.H."/>
            <person name="Zhong F.N."/>
            <person name="Zhong W."/>
            <person name="Zhou X."/>
            <person name="Zhu S.C."/>
            <person name="Zhu X."/>
            <person name="Smith H.O."/>
            <person name="Gibbs R.A."/>
            <person name="Myers E.W."/>
            <person name="Rubin G.M."/>
            <person name="Venter J.C."/>
        </authorList>
    </citation>
    <scope>NUCLEOTIDE SEQUENCE [LARGE SCALE GENOMIC DNA]</scope>
    <source>
        <strain>Berkeley</strain>
    </source>
</reference>
<reference key="5">
    <citation type="journal article" date="2002" name="Genome Biol.">
        <title>Annotation of the Drosophila melanogaster euchromatic genome: a systematic review.</title>
        <authorList>
            <person name="Misra S."/>
            <person name="Crosby M.A."/>
            <person name="Mungall C.J."/>
            <person name="Matthews B.B."/>
            <person name="Campbell K.S."/>
            <person name="Hradecky P."/>
            <person name="Huang Y."/>
            <person name="Kaminker J.S."/>
            <person name="Millburn G.H."/>
            <person name="Prochnik S.E."/>
            <person name="Smith C.D."/>
            <person name="Tupy J.L."/>
            <person name="Whitfield E.J."/>
            <person name="Bayraktaroglu L."/>
            <person name="Berman B.P."/>
            <person name="Bettencourt B.R."/>
            <person name="Celniker S.E."/>
            <person name="de Grey A.D.N.J."/>
            <person name="Drysdale R.A."/>
            <person name="Harris N.L."/>
            <person name="Richter J."/>
            <person name="Russo S."/>
            <person name="Schroeder A.J."/>
            <person name="Shu S.Q."/>
            <person name="Stapleton M."/>
            <person name="Yamada C."/>
            <person name="Ashburner M."/>
            <person name="Gelbart W.M."/>
            <person name="Rubin G.M."/>
            <person name="Lewis S.E."/>
        </authorList>
    </citation>
    <scope>GENOME REANNOTATION</scope>
    <source>
        <strain>Berkeley</strain>
    </source>
</reference>
<reference key="6">
    <citation type="journal article" date="1995" name="Development">
        <title>Analysis of cubitus interruptus regulation in Drosophila embryos and imaginal disks.</title>
        <authorList>
            <person name="Schwartz C."/>
            <person name="Locke J."/>
            <person name="Nishida C."/>
            <person name="Kornberg T.B."/>
        </authorList>
    </citation>
    <scope>NUCLEOTIDE SEQUENCE [GENOMIC DNA] OF 1-5</scope>
</reference>
<reference key="7">
    <citation type="journal article" date="2002" name="Science">
        <title>Nucleotide variation along the Drosophila melanogaster fourth chromosome.</title>
        <authorList>
            <person name="Wang W."/>
            <person name="Thornton K."/>
            <person name="Berry A."/>
            <person name="Long M."/>
        </authorList>
    </citation>
    <scope>NUCLEOTIDE SEQUENCE [GENOMIC DNA] OF 521-769</scope>
    <source>
        <strain>253.27</strain>
    </source>
</reference>
<reference key="8">
    <citation type="journal article" date="1997" name="Cell">
        <title>Costal2, a novel kinesin-related protein in the Hedgehog signaling pathway.</title>
        <authorList>
            <person name="Sisson J.C."/>
            <person name="Ho K.S."/>
            <person name="Suyama K."/>
            <person name="Scott M.P."/>
        </authorList>
    </citation>
    <scope>INTERACTION WITH COS</scope>
</reference>
<reference key="9">
    <citation type="journal article" date="2005" name="Dev. Cell">
        <title>Hedgehog-regulated Costal2-kinase complexes control phosphorylation and proteolytic processing of Cubitus interruptus.</title>
        <authorList>
            <person name="Zhang W."/>
            <person name="Zhao Y."/>
            <person name="Tong C."/>
            <person name="Wang G."/>
            <person name="Wang B."/>
            <person name="Jia J."/>
            <person name="Jiang J."/>
        </authorList>
    </citation>
    <scope>PHOSPHORYLATION</scope>
    <scope>PROTEOLYTIC PROCESSING</scope>
    <scope>INTERACTION WITH COS</scope>
</reference>
<reference key="10">
    <citation type="journal article" date="2005" name="Dev. Cell">
        <title>Phosphorylation by double-time/CKIepsilon and CKIalpha targets cubitus interruptus for Slimb/beta-TRCP-mediated proteolytic processing.</title>
        <authorList>
            <person name="Jia J."/>
            <person name="Zhang L."/>
            <person name="Zhang Q."/>
            <person name="Tong C."/>
            <person name="Wang B."/>
            <person name="Hou F."/>
            <person name="Amanai K."/>
            <person name="Jiang J."/>
        </authorList>
    </citation>
    <scope>INTERACTION WITH SLMB</scope>
    <scope>PHOSPHORYLATION</scope>
</reference>
<reference key="11">
    <citation type="journal article" date="2006" name="Dev. Cell">
        <title>A hedgehog-induced BTB protein modulates hedgehog signaling by degrading Ci/Gli transcription factor.</title>
        <authorList>
            <person name="Zhang Q."/>
            <person name="Zhang L."/>
            <person name="Wang B."/>
            <person name="Ou C.-Y."/>
            <person name="Chien C.-T."/>
            <person name="Jiang J."/>
        </authorList>
    </citation>
    <scope>INTERACTION WITH RDX</scope>
    <scope>UBIQUITINATION</scope>
</reference>
<reference key="12">
    <citation type="journal article" date="2015" name="Cell Host Microbe">
        <title>Bacterial uracil modulates Drosophila DUOX-dependent gut immunity via Hedgehog-induced signaling endosomes.</title>
        <authorList>
            <person name="Lee K.A."/>
            <person name="Kim B."/>
            <person name="Bhin J."/>
            <person name="Kim D.H."/>
            <person name="You H."/>
            <person name="Kim E.K."/>
            <person name="Kim S.H."/>
            <person name="Ryu J.H."/>
            <person name="Hwang D."/>
            <person name="Lee W.J."/>
        </authorList>
    </citation>
    <scope>FUNCTION</scope>
    <scope>DISRUPTION PHENOTYPE</scope>
</reference>
<accession>P19538</accession>
<accession>O18525</accession>
<accession>Q8T6T1</accession>
<accession>Q9V4A8</accession>
<name>CI_DROME</name>
<sequence>MDAYALPTYFPLAYSELQFLASRRAAAVAAAATVLPGSPCINQHHPTDVSSSVTVPSIIPTGGTSDSIKTSIQPQICNENTLLGNAGHQHNHQPQHVHNINVTGQPHDFHPAYRIPGYMEQLYSLQRTNSASSFHDPYVNCASAFHLAGLGLGSADFLGSRGLSSLGELHNAAVAAAAAGSLASTDFHFSVDGNRRLGSPRPPGGSIRASISRKRALSSSPYSDSFDINSMIRFSPNSLATIMNGSRGSSAASGSYGHISATALNPMSHVHSTRLQQIQAHLLRASAGLLNPMTPQQVAASGFSIGHMPTSASLRVNDVHPNLSDSHIQITTSPTVTKDVSQVPAAAFSLKNLDDAREKKGPFKDVVPEQPSSTSGGVAQVEADSASSQLSDRCYNNVVNNITGIPGDVKVNSRLDEYINCGSISIPSNEYDCANADTTDIKDEPGDFIETNCHWRSCRIEFITQDELVKHINNDHIQTNKKAFVCRWEDCTRGEKPFKAQYMLVVHMRRHTGEKPHKCTFEGCFKAYSRLENLKTHLRSHTGEKPYTCEYPGCSKAFSNASDRAKHQNRTHSNEKPYICKAPGCTKRYTDPSSLRKHVKTVHGAEFYANKKHKGLPLNDANSRLQQNNSRHNLQEHNIDSSPCSEDSHLGKMLGTSSPSIKSESDISSSNHHLVNGVRASDSLLTYSPDDLAENLNLDDGWNCDDDVDVADLPIVLRAMVNIGNGNASASTIGGSVLARQRFRGRLQTKGINSSTIMLCNIPESNRTFGISELNQRITELKMEPGTDAEIKIPKLPNTTIGGYTEDPLQNQTSFRNTVSNKQGTVSGSIQGQFRRDSQNSTASTYYGSMQSRRSSQSSQVSSIPTMRPNPSCNSTASFYDPISPGCSRRSSQMSNGANCNSFTSTSGLPVLNKESNKSLNACINKPNIGVQGVGIYNSSLPPPPSSHLIATNLKRLQRKDSEYHNFTSGRFSVPSYMHSLHIKNNKPVGENEFDKAIASNARRQTDPVPNINLDPLTNISRFSTTPHSFDINVGKTNNIASSINKDNLRKDLFTVSIKADMAMTSDQHPNERINLDEVEELILPDEMLQYLNLVKDDTNHLEKEHQAVPVGSNVSETIASNHYREQSNIYYTNKQILTPPSNVDIQPNTTKFTVQDKFAMTAVGGSFSQRELSTLAVPNEHGHAKCESFHHQSQKYMNTDIGSKQQSALPSAHQRQTEKSNYNQIIDSSMTSLPELNVDSIYPRNETENIFKVHGDHDNEIQCGIISQSQMSPSTNLNNDGQFSTVNMQPITTSKLFPPEPQKIVCDTQASNTSVMHLDTYQRTLEYVQSCQNWMETNNTSTNQIQSLPGMPVNNTLFPDVSSSTHPYHGTNMVINDMTTSLTSLLEENRYLQMMQ</sequence>
<dbReference type="EMBL" id="X54360">
    <property type="protein sequence ID" value="CAA38244.1"/>
    <property type="molecule type" value="mRNA"/>
</dbReference>
<dbReference type="EMBL" id="U66884">
    <property type="protein sequence ID" value="AAC47752.1"/>
    <property type="molecule type" value="Genomic_DNA"/>
</dbReference>
<dbReference type="EMBL" id="AE014135">
    <property type="protein sequence ID" value="AAF59373.2"/>
    <property type="molecule type" value="Genomic_DNA"/>
</dbReference>
<dbReference type="EMBL" id="AH003430">
    <property type="protein sequence ID" value="AAG15271.1"/>
    <property type="molecule type" value="Genomic_DNA"/>
</dbReference>
<dbReference type="EMBL" id="AF433680">
    <property type="protein sequence ID" value="AAM17953.1"/>
    <property type="molecule type" value="Genomic_DNA"/>
</dbReference>
<dbReference type="PIR" id="A38926">
    <property type="entry name" value="A38926"/>
</dbReference>
<dbReference type="RefSeq" id="NP_524617.3">
    <property type="nucleotide sequence ID" value="NM_079878.5"/>
</dbReference>
<dbReference type="PDB" id="3HQM">
    <property type="method" value="X-ray"/>
    <property type="resolution" value="1.74 A"/>
    <property type="chains" value="C/D=1356-1367"/>
</dbReference>
<dbReference type="PDBsum" id="3HQM"/>
<dbReference type="SMR" id="P19538"/>
<dbReference type="BioGRID" id="68605">
    <property type="interactions" value="192"/>
</dbReference>
<dbReference type="ComplexPortal" id="CPX-2700">
    <property type="entry name" value="Hedgehog signalling complex"/>
</dbReference>
<dbReference type="DIP" id="DIP-121N"/>
<dbReference type="ELM" id="P19538"/>
<dbReference type="FunCoup" id="P19538">
    <property type="interactions" value="128"/>
</dbReference>
<dbReference type="IntAct" id="P19538">
    <property type="interactions" value="8"/>
</dbReference>
<dbReference type="STRING" id="7227.FBpp0088245"/>
<dbReference type="iPTMnet" id="P19538"/>
<dbReference type="PaxDb" id="7227-FBpp0088245"/>
<dbReference type="EnsemblMetazoa" id="FBtr0089178">
    <property type="protein sequence ID" value="FBpp0088245"/>
    <property type="gene ID" value="FBgn0004859"/>
</dbReference>
<dbReference type="GeneID" id="43767"/>
<dbReference type="KEGG" id="dme:Dmel_CG2125"/>
<dbReference type="AGR" id="FB:FBgn0004859"/>
<dbReference type="CTD" id="12679"/>
<dbReference type="FlyBase" id="FBgn0004859">
    <property type="gene designation" value="ci"/>
</dbReference>
<dbReference type="VEuPathDB" id="VectorBase:FBgn0004859"/>
<dbReference type="eggNOG" id="KOG1721">
    <property type="taxonomic scope" value="Eukaryota"/>
</dbReference>
<dbReference type="GeneTree" id="ENSGT00940000169506"/>
<dbReference type="HOGENOM" id="CLU_004194_1_0_1"/>
<dbReference type="InParanoid" id="P19538"/>
<dbReference type="OMA" id="DCSRGEK"/>
<dbReference type="OrthoDB" id="3214149at2759"/>
<dbReference type="PhylomeDB" id="P19538"/>
<dbReference type="Reactome" id="R-DME-209159">
    <property type="pathway name" value="Assembly of the CI containing complexes"/>
</dbReference>
<dbReference type="Reactome" id="R-DME-209190">
    <property type="pathway name" value="Phosphorylation of CI"/>
</dbReference>
<dbReference type="Reactome" id="R-DME-209214">
    <property type="pathway name" value="Phosphorylation of SMO"/>
</dbReference>
<dbReference type="Reactome" id="R-DME-209338">
    <property type="pathway name" value="Assembly of the 'signalling complexes'"/>
</dbReference>
<dbReference type="Reactome" id="R-DME-209360">
    <property type="pathway name" value="Ubiquitination and proteolysis of phosphorylated CI"/>
</dbReference>
<dbReference type="Reactome" id="R-DME-209446">
    <property type="pathway name" value="N-HH ligand not bound to PTC receptor complex"/>
</dbReference>
<dbReference type="Reactome" id="R-DME-216119">
    <property type="pathway name" value="Activation of CI"/>
</dbReference>
<dbReference type="Reactome" id="R-DME-216167">
    <property type="pathway name" value="Nuclear CI is degraded"/>
</dbReference>
<dbReference type="Reactome" id="R-DME-216217">
    <property type="pathway name" value="Activation of SMO"/>
</dbReference>
<dbReference type="Reactome" id="R-DME-5610780">
    <property type="pathway name" value="Degradation of GLI1 by the proteasome"/>
</dbReference>
<dbReference type="Reactome" id="R-DME-5610785">
    <property type="pathway name" value="GLI3 is processed to GLI3R by the proteasome"/>
</dbReference>
<dbReference type="Reactome" id="R-DME-5610787">
    <property type="pathway name" value="Hedgehog 'off' state"/>
</dbReference>
<dbReference type="Reactome" id="R-DME-5632684">
    <property type="pathway name" value="Hedgehog 'on' state"/>
</dbReference>
<dbReference type="SignaLink" id="P19538"/>
<dbReference type="BioGRID-ORCS" id="43767">
    <property type="hits" value="0 hits in 3 CRISPR screens"/>
</dbReference>
<dbReference type="EvolutionaryTrace" id="P19538"/>
<dbReference type="GenomeRNAi" id="43767"/>
<dbReference type="PRO" id="PR:P19538"/>
<dbReference type="Proteomes" id="UP000000803">
    <property type="component" value="Chromosome 4"/>
</dbReference>
<dbReference type="Bgee" id="FBgn0004859">
    <property type="expression patterns" value="Expressed in visual pigment cell (sensu Nematoda and Protostomia) in testis and 164 other cell types or tissues"/>
</dbReference>
<dbReference type="ExpressionAtlas" id="P19538">
    <property type="expression patterns" value="baseline and differential"/>
</dbReference>
<dbReference type="GO" id="GO:0005829">
    <property type="term" value="C:cytosol"/>
    <property type="evidence" value="ECO:0000314"/>
    <property type="project" value="FlyBase"/>
</dbReference>
<dbReference type="GO" id="GO:0035301">
    <property type="term" value="C:Hedgehog signaling complex"/>
    <property type="evidence" value="ECO:0000353"/>
    <property type="project" value="FlyBase"/>
</dbReference>
<dbReference type="GO" id="GO:0005654">
    <property type="term" value="C:nucleoplasm"/>
    <property type="evidence" value="ECO:0000304"/>
    <property type="project" value="Reactome"/>
</dbReference>
<dbReference type="GO" id="GO:0005634">
    <property type="term" value="C:nucleus"/>
    <property type="evidence" value="ECO:0000314"/>
    <property type="project" value="FlyBase"/>
</dbReference>
<dbReference type="GO" id="GO:0032991">
    <property type="term" value="C:protein-containing complex"/>
    <property type="evidence" value="ECO:0000353"/>
    <property type="project" value="FlyBase"/>
</dbReference>
<dbReference type="GO" id="GO:0008140">
    <property type="term" value="F:cAMP response element binding protein binding"/>
    <property type="evidence" value="ECO:0000353"/>
    <property type="project" value="FlyBase"/>
</dbReference>
<dbReference type="GO" id="GO:0003677">
    <property type="term" value="F:DNA binding"/>
    <property type="evidence" value="ECO:0000303"/>
    <property type="project" value="UniProtKB"/>
</dbReference>
<dbReference type="GO" id="GO:0001228">
    <property type="term" value="F:DNA-binding transcription activator activity, RNA polymerase II-specific"/>
    <property type="evidence" value="ECO:0000315"/>
    <property type="project" value="FlyBase"/>
</dbReference>
<dbReference type="GO" id="GO:0000981">
    <property type="term" value="F:DNA-binding transcription factor activity, RNA polymerase II-specific"/>
    <property type="evidence" value="ECO:0000314"/>
    <property type="project" value="FlyBase"/>
</dbReference>
<dbReference type="GO" id="GO:0042802">
    <property type="term" value="F:identical protein binding"/>
    <property type="evidence" value="ECO:0000353"/>
    <property type="project" value="IntAct"/>
</dbReference>
<dbReference type="GO" id="GO:0042803">
    <property type="term" value="F:protein homodimerization activity"/>
    <property type="evidence" value="ECO:0000314"/>
    <property type="project" value="FlyBase"/>
</dbReference>
<dbReference type="GO" id="GO:0019901">
    <property type="term" value="F:protein kinase binding"/>
    <property type="evidence" value="ECO:0000314"/>
    <property type="project" value="FlyBase"/>
</dbReference>
<dbReference type="GO" id="GO:0000978">
    <property type="term" value="F:RNA polymerase II cis-regulatory region sequence-specific DNA binding"/>
    <property type="evidence" value="ECO:0000318"/>
    <property type="project" value="GO_Central"/>
</dbReference>
<dbReference type="GO" id="GO:0000977">
    <property type="term" value="F:RNA polymerase II transcription regulatory region sequence-specific DNA binding"/>
    <property type="evidence" value="ECO:0000314"/>
    <property type="project" value="FlyBase"/>
</dbReference>
<dbReference type="GO" id="GO:0043565">
    <property type="term" value="F:sequence-specific DNA binding"/>
    <property type="evidence" value="ECO:0000314"/>
    <property type="project" value="FlyBase"/>
</dbReference>
<dbReference type="GO" id="GO:0000976">
    <property type="term" value="F:transcription cis-regulatory region binding"/>
    <property type="evidence" value="ECO:0000314"/>
    <property type="project" value="FlyBase"/>
</dbReference>
<dbReference type="GO" id="GO:0008270">
    <property type="term" value="F:zinc ion binding"/>
    <property type="evidence" value="ECO:0007669"/>
    <property type="project" value="UniProtKB-KW"/>
</dbReference>
<dbReference type="GO" id="GO:0001745">
    <property type="term" value="P:compound eye morphogenesis"/>
    <property type="evidence" value="ECO:0000315"/>
    <property type="project" value="FlyBase"/>
</dbReference>
<dbReference type="GO" id="GO:0035017">
    <property type="term" value="P:cuticle pattern formation"/>
    <property type="evidence" value="ECO:0000315"/>
    <property type="project" value="FlyBase"/>
</dbReference>
<dbReference type="GO" id="GO:0048813">
    <property type="term" value="P:dendrite morphogenesis"/>
    <property type="evidence" value="ECO:0000315"/>
    <property type="project" value="FlyBase"/>
</dbReference>
<dbReference type="GO" id="GO:0035224">
    <property type="term" value="P:genital disc anterior/posterior pattern formation"/>
    <property type="evidence" value="ECO:0000270"/>
    <property type="project" value="FlyBase"/>
</dbReference>
<dbReference type="GO" id="GO:0060914">
    <property type="term" value="P:heart formation"/>
    <property type="evidence" value="ECO:0000315"/>
    <property type="project" value="FlyBase"/>
</dbReference>
<dbReference type="GO" id="GO:0035217">
    <property type="term" value="P:labial disc development"/>
    <property type="evidence" value="ECO:0000315"/>
    <property type="project" value="FlyBase"/>
</dbReference>
<dbReference type="GO" id="GO:0002385">
    <property type="term" value="P:mucosal immune response"/>
    <property type="evidence" value="ECO:0000315"/>
    <property type="project" value="FlyBase"/>
</dbReference>
<dbReference type="GO" id="GO:0035331">
    <property type="term" value="P:negative regulation of hippo signaling"/>
    <property type="evidence" value="ECO:0000316"/>
    <property type="project" value="FlyBase"/>
</dbReference>
<dbReference type="GO" id="GO:0000122">
    <property type="term" value="P:negative regulation of transcription by RNA polymerase II"/>
    <property type="evidence" value="ECO:0000315"/>
    <property type="project" value="FlyBase"/>
</dbReference>
<dbReference type="GO" id="GO:0030858">
    <property type="term" value="P:positive regulation of epithelial cell differentiation"/>
    <property type="evidence" value="ECO:0000315"/>
    <property type="project" value="FlyBase"/>
</dbReference>
<dbReference type="GO" id="GO:1900087">
    <property type="term" value="P:positive regulation of G1/S transition of mitotic cell cycle"/>
    <property type="evidence" value="ECO:0000315"/>
    <property type="project" value="FlyBase"/>
</dbReference>
<dbReference type="GO" id="GO:0045944">
    <property type="term" value="P:positive regulation of transcription by RNA polymerase II"/>
    <property type="evidence" value="ECO:0000314"/>
    <property type="project" value="FlyBase"/>
</dbReference>
<dbReference type="GO" id="GO:2000495">
    <property type="term" value="P:regulation of cell proliferation involved in compound eye morphogenesis"/>
    <property type="evidence" value="ECO:0000315"/>
    <property type="project" value="FlyBase"/>
</dbReference>
<dbReference type="GO" id="GO:0006355">
    <property type="term" value="P:regulation of DNA-templated transcription"/>
    <property type="evidence" value="ECO:0000303"/>
    <property type="project" value="UniProtKB"/>
</dbReference>
<dbReference type="GO" id="GO:0007346">
    <property type="term" value="P:regulation of mitotic cell cycle"/>
    <property type="evidence" value="ECO:0000315"/>
    <property type="project" value="FlyBase"/>
</dbReference>
<dbReference type="GO" id="GO:0006357">
    <property type="term" value="P:regulation of transcription by RNA polymerase II"/>
    <property type="evidence" value="ECO:0000318"/>
    <property type="project" value="GO_Central"/>
</dbReference>
<dbReference type="GO" id="GO:0007367">
    <property type="term" value="P:segment polarity determination"/>
    <property type="evidence" value="ECO:0000315"/>
    <property type="project" value="UniProtKB"/>
</dbReference>
<dbReference type="GO" id="GO:0007224">
    <property type="term" value="P:smoothened signaling pathway"/>
    <property type="evidence" value="ECO:0000314"/>
    <property type="project" value="FlyBase"/>
</dbReference>
<dbReference type="GO" id="GO:0035277">
    <property type="term" value="P:spiracle morphogenesis, open tracheal system"/>
    <property type="evidence" value="ECO:0000315"/>
    <property type="project" value="FlyBase"/>
</dbReference>
<dbReference type="GO" id="GO:0048100">
    <property type="term" value="P:wing disc anterior/posterior pattern formation"/>
    <property type="evidence" value="ECO:0000315"/>
    <property type="project" value="FlyBase"/>
</dbReference>
<dbReference type="FunFam" id="3.30.160.60:FF:000019">
    <property type="entry name" value="GLI family zinc finger 3"/>
    <property type="match status" value="1"/>
</dbReference>
<dbReference type="FunFam" id="3.30.160.60:FF:000031">
    <property type="entry name" value="GLI family zinc finger 3"/>
    <property type="match status" value="1"/>
</dbReference>
<dbReference type="FunFam" id="3.30.160.60:FF:000036">
    <property type="entry name" value="GLI family zinc finger 3"/>
    <property type="match status" value="1"/>
</dbReference>
<dbReference type="FunFam" id="3.30.160.60:FF:000048">
    <property type="entry name" value="GLI family zinc finger 3"/>
    <property type="match status" value="1"/>
</dbReference>
<dbReference type="FunFam" id="3.30.160.60:FF:000068">
    <property type="entry name" value="GLI family zinc finger 3"/>
    <property type="match status" value="1"/>
</dbReference>
<dbReference type="Gene3D" id="3.30.160.60">
    <property type="entry name" value="Classic Zinc Finger"/>
    <property type="match status" value="5"/>
</dbReference>
<dbReference type="InterPro" id="IPR043359">
    <property type="entry name" value="GLI-like"/>
</dbReference>
<dbReference type="InterPro" id="IPR056436">
    <property type="entry name" value="Znf-C2H2_ZIC1-5/GLI1-3-like"/>
</dbReference>
<dbReference type="InterPro" id="IPR036236">
    <property type="entry name" value="Znf_C2H2_sf"/>
</dbReference>
<dbReference type="InterPro" id="IPR013087">
    <property type="entry name" value="Znf_C2H2_type"/>
</dbReference>
<dbReference type="PANTHER" id="PTHR45718">
    <property type="entry name" value="TRANSCRIPTIONAL ACTIVATOR CUBITUS INTERRUPTUS"/>
    <property type="match status" value="1"/>
</dbReference>
<dbReference type="PANTHER" id="PTHR45718:SF4">
    <property type="entry name" value="TRANSCRIPTIONAL ACTIVATOR CUBITUS INTERRUPTUS"/>
    <property type="match status" value="1"/>
</dbReference>
<dbReference type="Pfam" id="PF00096">
    <property type="entry name" value="zf-C2H2"/>
    <property type="match status" value="2"/>
</dbReference>
<dbReference type="Pfam" id="PF23561">
    <property type="entry name" value="zf-C2H2_15"/>
    <property type="match status" value="1"/>
</dbReference>
<dbReference type="SMART" id="SM00355">
    <property type="entry name" value="ZnF_C2H2"/>
    <property type="match status" value="5"/>
</dbReference>
<dbReference type="SUPFAM" id="SSF57667">
    <property type="entry name" value="beta-beta-alpha zinc fingers"/>
    <property type="match status" value="3"/>
</dbReference>
<dbReference type="PROSITE" id="PS00028">
    <property type="entry name" value="ZINC_FINGER_C2H2_1"/>
    <property type="match status" value="4"/>
</dbReference>
<dbReference type="PROSITE" id="PS50157">
    <property type="entry name" value="ZINC_FINGER_C2H2_2"/>
    <property type="match status" value="4"/>
</dbReference>
<keyword id="KW-0002">3D-structure</keyword>
<keyword id="KW-0010">Activator</keyword>
<keyword id="KW-0217">Developmental protein</keyword>
<keyword id="KW-0238">DNA-binding</keyword>
<keyword id="KW-0479">Metal-binding</keyword>
<keyword id="KW-0539">Nucleus</keyword>
<keyword id="KW-0597">Phosphoprotein</keyword>
<keyword id="KW-1185">Reference proteome</keyword>
<keyword id="KW-0677">Repeat</keyword>
<keyword id="KW-0678">Repressor</keyword>
<keyword id="KW-0709">Segmentation polarity protein</keyword>
<keyword id="KW-0804">Transcription</keyword>
<keyword id="KW-0805">Transcription regulation</keyword>
<keyword id="KW-0832">Ubl conjugation</keyword>
<keyword id="KW-0862">Zinc</keyword>
<keyword id="KW-0863">Zinc-finger</keyword>
<feature type="chain" id="PRO_0000046917" description="Transcriptional activator cubitus interruptus">
    <location>
        <begin position="1"/>
        <end position="1397"/>
    </location>
</feature>
<feature type="chain" id="PRO_0000406217" description="Transcriptional repressor cubitus interruptus">
    <location>
        <begin position="1"/>
        <end status="unknown"/>
    </location>
</feature>
<feature type="zinc finger region" description="C2H2-type 1" evidence="1">
    <location>
        <begin position="451"/>
        <end position="476"/>
    </location>
</feature>
<feature type="zinc finger region" description="C2H2-type 2" evidence="1">
    <location>
        <begin position="484"/>
        <end position="511"/>
    </location>
</feature>
<feature type="zinc finger region" description="C2H2-type 3" evidence="1">
    <location>
        <begin position="517"/>
        <end position="541"/>
    </location>
</feature>
<feature type="zinc finger region" description="C2H2-type 4" evidence="1">
    <location>
        <begin position="547"/>
        <end position="572"/>
    </location>
</feature>
<feature type="zinc finger region" description="C2H2-type 5" evidence="1">
    <location>
        <begin position="578"/>
        <end position="603"/>
    </location>
</feature>
<feature type="region of interest" description="Interaction with RDX" evidence="5">
    <location>
        <begin position="1"/>
        <end position="440"/>
    </location>
</feature>
<feature type="region of interest" description="Disordered" evidence="2">
    <location>
        <begin position="193"/>
        <end position="212"/>
    </location>
</feature>
<feature type="region of interest" description="Disordered" evidence="2">
    <location>
        <begin position="361"/>
        <end position="383"/>
    </location>
</feature>
<feature type="region of interest" description="Disordered" evidence="2">
    <location>
        <begin position="636"/>
        <end position="669"/>
    </location>
</feature>
<feature type="region of interest" description="Disordered" evidence="2">
    <location>
        <begin position="807"/>
        <end position="877"/>
    </location>
</feature>
<feature type="region of interest" description="Interaction with RDX" evidence="5">
    <location>
        <begin position="1161"/>
        <end position="1397"/>
    </location>
</feature>
<feature type="compositionally biased region" description="Low complexity" evidence="2">
    <location>
        <begin position="657"/>
        <end position="669"/>
    </location>
</feature>
<feature type="compositionally biased region" description="Polar residues" evidence="2">
    <location>
        <begin position="807"/>
        <end position="832"/>
    </location>
</feature>
<feature type="compositionally biased region" description="Polar residues" evidence="2">
    <location>
        <begin position="839"/>
        <end position="848"/>
    </location>
</feature>
<feature type="compositionally biased region" description="Low complexity" evidence="2">
    <location>
        <begin position="849"/>
        <end position="863"/>
    </location>
</feature>
<feature type="sequence conflict" description="In Ref. 3; AAC47752." evidence="9" ref="3">
    <original>T</original>
    <variation>K</variation>
    <location>
        <position position="403"/>
    </location>
</feature>
<feature type="sequence conflict" description="In Ref. 1 and 2." evidence="9" ref="1 2">
    <original>S</original>
    <variation>R</variation>
    <location>
        <position position="457"/>
    </location>
</feature>
<feature type="sequence conflict" description="In Ref. 1 and 2." evidence="9" ref="1 2">
    <original>YT</original>
    <variation>IS</variation>
    <location>
        <begin position="804"/>
        <end position="805"/>
    </location>
</feature>
<feature type="sequence conflict" description="In Ref. 1 and 2." evidence="9" ref="1 2">
    <original>T</original>
    <variation>S</variation>
    <location>
        <position position="968"/>
    </location>
</feature>
<feature type="sequence conflict" description="In Ref. 1 and 2." evidence="9" ref="1 2">
    <original>S</original>
    <variation>L</variation>
    <location>
        <position position="1043"/>
    </location>
</feature>
<feature type="sequence conflict" description="In Ref. 1 and 2." evidence="9" ref="1 2">
    <location>
        <position position="1152"/>
    </location>
</feature>
<feature type="sequence conflict" description="In Ref. 3; AAC47752." evidence="9" ref="3">
    <original>V</original>
    <variation>L</variation>
    <location>
        <position position="1155"/>
    </location>
</feature>
<feature type="sequence conflict" description="In Ref. 1 and 2." evidence="9" ref="1 2">
    <original>DMTTSLTSLLEENRYLQMMQ</original>
    <variation>V</variation>
    <location>
        <begin position="1378"/>
        <end position="1397"/>
    </location>
</feature>
<organism>
    <name type="scientific">Drosophila melanogaster</name>
    <name type="common">Fruit fly</name>
    <dbReference type="NCBI Taxonomy" id="7227"/>
    <lineage>
        <taxon>Eukaryota</taxon>
        <taxon>Metazoa</taxon>
        <taxon>Ecdysozoa</taxon>
        <taxon>Arthropoda</taxon>
        <taxon>Hexapoda</taxon>
        <taxon>Insecta</taxon>
        <taxon>Pterygota</taxon>
        <taxon>Neoptera</taxon>
        <taxon>Endopterygota</taxon>
        <taxon>Diptera</taxon>
        <taxon>Brachycera</taxon>
        <taxon>Muscomorpha</taxon>
        <taxon>Ephydroidea</taxon>
        <taxon>Drosophilidae</taxon>
        <taxon>Drosophila</taxon>
        <taxon>Sophophora</taxon>
    </lineage>
</organism>
<gene>
    <name type="primary">ci</name>
    <name type="synonym">ci-D</name>
    <name type="ORF">CG2125</name>
</gene>
<proteinExistence type="evidence at protein level"/>
<protein>
    <recommendedName>
        <fullName>Transcriptional activator cubitus interruptus</fullName>
        <shortName>Transcriptional activator ci</shortName>
    </recommendedName>
    <alternativeName>
        <fullName>ci form of 155 kDa</fullName>
        <shortName>ci-155</shortName>
    </alternativeName>
    <alternativeName>
        <fullName>ci full-length protein</fullName>
        <shortName>ciFL</shortName>
    </alternativeName>
    <component>
        <recommendedName>
            <fullName>Transcriptional repressor cubitus interruptus</fullName>
            <shortName>Transcriptional repressor ci</shortName>
        </recommendedName>
        <alternativeName>
            <fullName>ci C-terminally truncated form</fullName>
        </alternativeName>
        <alternativeName>
            <fullName>ci form of 75 kDa</fullName>
            <shortName>ci-75</shortName>
        </alternativeName>
    </component>
</protein>
<comment type="function">
    <text>Has a dual function as a transcriptional activator and a repressor of the hedgehog (Hh) pathway. The full-length ci form (ciFL), acts as an activator (ciA) while ciR, its C-terminally truncated form, acts as a repressor. Involved in segment polarity. Required for the normal development of the posterior half of each embryonic segment. Engrailed protein directly represses ci expression in posterior compartment cells. Essential component of a hh-signaling pathway which regulates the Duox-dependent gut immune response to bacterial uracil; required to activate Cad99C-dependent endosome formation, norpA-dependent Ca2+ mobilization and p38 MAPK, which are essential steps in the Duox-dependent production of reactive oxygen species (ROS) in response to intestinal bacterial infection (PubMed:25639794).</text>
</comment>
<comment type="subunit">
    <text evidence="3 4 5 8">Interacts with RDX (PubMed:16740475). Interacts with cos (PubMed:15691767, PubMed:9244298). Interacts with slmb; the interaction is enhanced by phosphorylation by CkIalpha and dco (PubMed:16326393).</text>
</comment>
<comment type="interaction">
    <interactant intactId="EBI-94976">
        <id>P19538</id>
    </interactant>
    <interactant intactId="EBI-94976">
        <id>P19538</id>
        <label>ci</label>
    </interactant>
    <organismsDiffer>false</organismsDiffer>
    <experiments>6</experiments>
</comment>
<comment type="interaction">
    <interactant intactId="EBI-94976">
        <id>P19538</id>
    </interactant>
    <interactant intactId="EBI-102069">
        <id>O16844</id>
        <label>cos</label>
    </interactant>
    <organismsDiffer>false</organismsDiffer>
    <experiments>12</experiments>
</comment>
<comment type="interaction">
    <interactant intactId="EBI-94976">
        <id>P19538</id>
    </interactant>
    <interactant intactId="EBI-165536">
        <id>P23647</id>
        <label>fu</label>
    </interactant>
    <organismsDiffer>false</organismsDiffer>
    <experiments>8</experiments>
</comment>
<comment type="interaction">
    <interactant intactId="EBI-94976">
        <id>P19538</id>
    </interactant>
    <interactant intactId="EBI-868028">
        <id>O01368</id>
        <label>nej</label>
    </interactant>
    <organismsDiffer>false</organismsDiffer>
    <experiments>3</experiments>
</comment>
<comment type="interaction">
    <interactant intactId="EBI-94976">
        <id>P19538</id>
    </interactant>
    <interactant intactId="EBI-15659276">
        <id>Q9VFP2-2</id>
        <label>rdx</label>
    </interactant>
    <organismsDiffer>false</organismsDiffer>
    <experiments>8</experiments>
</comment>
<comment type="interaction">
    <interactant intactId="EBI-94976">
        <id>P19538</id>
    </interactant>
    <interactant intactId="EBI-110605">
        <id>Q9VG38</id>
        <label>Su(fu)</label>
    </interactant>
    <organismsDiffer>false</organismsDiffer>
    <experiments>5</experiments>
</comment>
<comment type="subcellular location">
    <subcellularLocation>
        <location>Nucleus</location>
    </subcellularLocation>
</comment>
<comment type="developmental stage">
    <text evidence="6">In embryos, expressed uniformly throughout the blastoderm stage and gastrulation (from stage 5). During stage 10, ci is eliminated from the posterior compartment of each segment forming 15 segmentally repeating stripes at the end of the short phase of germ-band extension.</text>
</comment>
<comment type="PTM">
    <text evidence="5">Polyubiquitinated by RDX in the presence of CUL3, which results in proteasomal degradation.</text>
</comment>
<comment type="PTM">
    <text evidence="3 4">Phosphorylated on multiple sites by protein kinase A (PKA) and phosphorylation by PKA primes further phosphorylation by CK1 and GSK3. Phosphorylation is essential for its proteolytic processing. cos recruits multiple kinases to promote efficient phosphorylation of ci while Hh signaling inhibits phosphorylation by restricting the accessibility of ci to the kinases (PubMed:15691767). Phosphorylation by CkIalpha and dco enhances binding to Slmb, the F-box recognition component of the SCF(slmb) E3 ubiquitin-protein ligase required for ci processing (PubMed:16326393).</text>
</comment>
<comment type="PTM">
    <text evidence="3">Transcriptional repressor ciR, a C-terminally truncated form, is generated from the full-length ci (ciFL/ci-155) through proteolytic processing. Hh suppresses the formation of ci75 and promotes the conversion of ci155 into a transcriptional activator (ci155A).</text>
</comment>
<comment type="disruption phenotype">
    <text evidence="7">RNAi-mediated knockdown severely reduces adult survival following the ingestion of E.carotovora. Abolishes Cad99C-dependent formation of endosomes and DUOX-dependent up-regulation of reactive oxygen species (ROS) in the intestines of adults fed bacteria-derived uracil.</text>
</comment>
<comment type="similarity">
    <text evidence="9">Belongs to the GLI C2H2-type zinc-finger protein family.</text>
</comment>
<evidence type="ECO:0000255" key="1">
    <source>
        <dbReference type="PROSITE-ProRule" id="PRU00042"/>
    </source>
</evidence>
<evidence type="ECO:0000256" key="2">
    <source>
        <dbReference type="SAM" id="MobiDB-lite"/>
    </source>
</evidence>
<evidence type="ECO:0000269" key="3">
    <source>
    </source>
</evidence>
<evidence type="ECO:0000269" key="4">
    <source>
    </source>
</evidence>
<evidence type="ECO:0000269" key="5">
    <source>
    </source>
</evidence>
<evidence type="ECO:0000269" key="6">
    <source>
    </source>
</evidence>
<evidence type="ECO:0000269" key="7">
    <source>
    </source>
</evidence>
<evidence type="ECO:0000269" key="8">
    <source>
    </source>
</evidence>
<evidence type="ECO:0000305" key="9"/>